<comment type="function">
    <text evidence="1">NDH-1 shuttles electrons from NADH, via FMN and iron-sulfur (Fe-S) centers, to quinones in the respiratory chain. The immediate electron acceptor for the enzyme in this species is believed to be ubiquinone. Couples the redox reaction to proton translocation (for every two electrons transferred, four hydrogen ions are translocated across the cytoplasmic membrane), and thus conserves the redox energy in a proton gradient.</text>
</comment>
<comment type="catalytic activity">
    <reaction evidence="1">
        <text>a quinone + NADH + 5 H(+)(in) = a quinol + NAD(+) + 4 H(+)(out)</text>
        <dbReference type="Rhea" id="RHEA:57888"/>
        <dbReference type="ChEBI" id="CHEBI:15378"/>
        <dbReference type="ChEBI" id="CHEBI:24646"/>
        <dbReference type="ChEBI" id="CHEBI:57540"/>
        <dbReference type="ChEBI" id="CHEBI:57945"/>
        <dbReference type="ChEBI" id="CHEBI:132124"/>
    </reaction>
</comment>
<comment type="subunit">
    <text evidence="1">NDH-1 is composed of 14 different subunits. Subunits NuoB, C, D, E, F, and G constitute the peripheral sector of the complex.</text>
</comment>
<comment type="subcellular location">
    <subcellularLocation>
        <location evidence="1">Cell inner membrane</location>
        <topology evidence="1">Peripheral membrane protein</topology>
        <orientation evidence="1">Cytoplasmic side</orientation>
    </subcellularLocation>
</comment>
<comment type="similarity">
    <text evidence="1">Belongs to the complex I 49 kDa subunit family.</text>
</comment>
<protein>
    <recommendedName>
        <fullName evidence="1">NADH-quinone oxidoreductase subunit D 2</fullName>
        <ecNumber evidence="1">7.1.1.-</ecNumber>
    </recommendedName>
    <alternativeName>
        <fullName evidence="1">NADH dehydrogenase I subunit D 2</fullName>
    </alternativeName>
    <alternativeName>
        <fullName evidence="1">NDH-1 subunit D 2</fullName>
    </alternativeName>
</protein>
<gene>
    <name evidence="1" type="primary">nuoD2</name>
    <name type="ordered locus">Anae109_1293</name>
</gene>
<evidence type="ECO:0000255" key="1">
    <source>
        <dbReference type="HAMAP-Rule" id="MF_01358"/>
    </source>
</evidence>
<evidence type="ECO:0000256" key="2">
    <source>
        <dbReference type="SAM" id="MobiDB-lite"/>
    </source>
</evidence>
<reference key="1">
    <citation type="journal article" date="2015" name="Genome Announc.">
        <title>Complete genome sequence of Anaeromyxobacter sp. Fw109-5, an anaerobic, metal-reducing bacterium isolated from a contaminated subsurface environment.</title>
        <authorList>
            <person name="Hwang C."/>
            <person name="Copeland A."/>
            <person name="Lucas S."/>
            <person name="Lapidus A."/>
            <person name="Barry K."/>
            <person name="Glavina Del Rio T."/>
            <person name="Dalin E."/>
            <person name="Tice H."/>
            <person name="Pitluck S."/>
            <person name="Sims D."/>
            <person name="Brettin T."/>
            <person name="Bruce D.C."/>
            <person name="Detter J.C."/>
            <person name="Han C.S."/>
            <person name="Schmutz J."/>
            <person name="Larimer F.W."/>
            <person name="Land M.L."/>
            <person name="Hauser L.J."/>
            <person name="Kyrpides N."/>
            <person name="Lykidis A."/>
            <person name="Richardson P."/>
            <person name="Belieav A."/>
            <person name="Sanford R.A."/>
            <person name="Loeffler F.E."/>
            <person name="Fields M.W."/>
        </authorList>
    </citation>
    <scope>NUCLEOTIDE SEQUENCE [LARGE SCALE GENOMIC DNA]</scope>
    <source>
        <strain>Fw109-5</strain>
    </source>
</reference>
<name>NUOD2_ANADF</name>
<keyword id="KW-0997">Cell inner membrane</keyword>
<keyword id="KW-1003">Cell membrane</keyword>
<keyword id="KW-0472">Membrane</keyword>
<keyword id="KW-0520">NAD</keyword>
<keyword id="KW-0874">Quinone</keyword>
<keyword id="KW-1185">Reference proteome</keyword>
<keyword id="KW-1278">Translocase</keyword>
<keyword id="KW-0813">Transport</keyword>
<keyword id="KW-0830">Ubiquinone</keyword>
<feature type="chain" id="PRO_0000371817" description="NADH-quinone oxidoreductase subunit D 2">
    <location>
        <begin position="1"/>
        <end position="431"/>
    </location>
</feature>
<feature type="region of interest" description="Disordered" evidence="2">
    <location>
        <begin position="1"/>
        <end position="27"/>
    </location>
</feature>
<dbReference type="EC" id="7.1.1.-" evidence="1"/>
<dbReference type="EMBL" id="CP000769">
    <property type="protein sequence ID" value="ABS25501.1"/>
    <property type="molecule type" value="Genomic_DNA"/>
</dbReference>
<dbReference type="RefSeq" id="WP_011985607.1">
    <property type="nucleotide sequence ID" value="NC_009675.1"/>
</dbReference>
<dbReference type="SMR" id="A7H9V5"/>
<dbReference type="STRING" id="404589.Anae109_1293"/>
<dbReference type="KEGG" id="afw:Anae109_1293"/>
<dbReference type="eggNOG" id="COG0649">
    <property type="taxonomic scope" value="Bacteria"/>
</dbReference>
<dbReference type="HOGENOM" id="CLU_015134_1_2_7"/>
<dbReference type="OrthoDB" id="9801496at2"/>
<dbReference type="Proteomes" id="UP000006382">
    <property type="component" value="Chromosome"/>
</dbReference>
<dbReference type="GO" id="GO:0005886">
    <property type="term" value="C:plasma membrane"/>
    <property type="evidence" value="ECO:0007669"/>
    <property type="project" value="UniProtKB-SubCell"/>
</dbReference>
<dbReference type="GO" id="GO:0051287">
    <property type="term" value="F:NAD binding"/>
    <property type="evidence" value="ECO:0007669"/>
    <property type="project" value="InterPro"/>
</dbReference>
<dbReference type="GO" id="GO:0050136">
    <property type="term" value="F:NADH:ubiquinone reductase (non-electrogenic) activity"/>
    <property type="evidence" value="ECO:0007669"/>
    <property type="project" value="UniProtKB-UniRule"/>
</dbReference>
<dbReference type="GO" id="GO:0048038">
    <property type="term" value="F:quinone binding"/>
    <property type="evidence" value="ECO:0007669"/>
    <property type="project" value="UniProtKB-KW"/>
</dbReference>
<dbReference type="Gene3D" id="1.10.645.10">
    <property type="entry name" value="Cytochrome-c3 Hydrogenase, chain B"/>
    <property type="match status" value="1"/>
</dbReference>
<dbReference type="HAMAP" id="MF_01358">
    <property type="entry name" value="NDH1_NuoD"/>
    <property type="match status" value="1"/>
</dbReference>
<dbReference type="InterPro" id="IPR001135">
    <property type="entry name" value="NADH_Q_OxRdtase_suD"/>
</dbReference>
<dbReference type="InterPro" id="IPR022885">
    <property type="entry name" value="NDH1_su_D/H"/>
</dbReference>
<dbReference type="InterPro" id="IPR029014">
    <property type="entry name" value="NiFe-Hase_large"/>
</dbReference>
<dbReference type="NCBIfam" id="TIGR01962">
    <property type="entry name" value="NuoD"/>
    <property type="match status" value="1"/>
</dbReference>
<dbReference type="NCBIfam" id="NF004739">
    <property type="entry name" value="PRK06075.1"/>
    <property type="match status" value="1"/>
</dbReference>
<dbReference type="PANTHER" id="PTHR11993:SF10">
    <property type="entry name" value="NADH DEHYDROGENASE [UBIQUINONE] IRON-SULFUR PROTEIN 2, MITOCHONDRIAL"/>
    <property type="match status" value="1"/>
</dbReference>
<dbReference type="PANTHER" id="PTHR11993">
    <property type="entry name" value="NADH-UBIQUINONE OXIDOREDUCTASE 49 KDA SUBUNIT"/>
    <property type="match status" value="1"/>
</dbReference>
<dbReference type="Pfam" id="PF00346">
    <property type="entry name" value="Complex1_49kDa"/>
    <property type="match status" value="1"/>
</dbReference>
<dbReference type="SUPFAM" id="SSF56762">
    <property type="entry name" value="HydB/Nqo4-like"/>
    <property type="match status" value="1"/>
</dbReference>
<accession>A7H9V5</accession>
<organism>
    <name type="scientific">Anaeromyxobacter sp. (strain Fw109-5)</name>
    <dbReference type="NCBI Taxonomy" id="404589"/>
    <lineage>
        <taxon>Bacteria</taxon>
        <taxon>Pseudomonadati</taxon>
        <taxon>Myxococcota</taxon>
        <taxon>Myxococcia</taxon>
        <taxon>Myxococcales</taxon>
        <taxon>Cystobacterineae</taxon>
        <taxon>Anaeromyxobacteraceae</taxon>
        <taxon>Anaeromyxobacter</taxon>
    </lineage>
</organism>
<sequence length="431" mass="47477">MNDHKGLGGLDTEATPGSFGAGEPPRALGQAGLAAENELDAPLASKLMTVNLGPSHPAMHGVTRAVVELDGEMIRSMKLDIGFLHRGFEKSCENVTWTQCFPYTDRLNYVSSIMNNVGFALAVEKLCKLDVPERAKYLRVVTSEIHRICDHLTLVGAMAMELGAMTVFLYAIEARDIIYDRLAELCGARLTSNYGRIGGVARDTPDGWIEKTEKTLDRVKGYVDEIDQLVSRNRIFIDRTRGTGVVPRADAIELGFTGPCLRASGEPYDLRKAAPYLVYDRIDFDIPVGTNGDNFDRFQMRMEEMRQSDRIIRQCFAQMEPGEIAVQDFRYVLPPKPLVYGTIEGLMAHFKIIMEGIQVPAGEAYGYTEAANGELGFYVVSDGGGRPYKLGLRAPGWPMLAALPFMSVGSLLSDLIPTFDSINMIGGEVEQ</sequence>
<proteinExistence type="inferred from homology"/>